<feature type="chain" id="PRO_0000330077" description="Mitochondrial inner membrane protease ATP23">
    <location>
        <begin position="1"/>
        <end position="250"/>
    </location>
</feature>
<feature type="active site" evidence="2">
    <location>
        <position position="151"/>
    </location>
</feature>
<feature type="binding site" evidence="1">
    <location>
        <position position="150"/>
    </location>
    <ligand>
        <name>a divalent metal cation</name>
        <dbReference type="ChEBI" id="CHEBI:60240"/>
        <note>catalytic</note>
    </ligand>
</feature>
<feature type="binding site" evidence="1">
    <location>
        <position position="154"/>
    </location>
    <ligand>
        <name>a divalent metal cation</name>
        <dbReference type="ChEBI" id="CHEBI:60240"/>
        <note>catalytic</note>
    </ligand>
</feature>
<dbReference type="EC" id="3.4.24.-"/>
<dbReference type="EMBL" id="CR382132">
    <property type="protein sequence ID" value="CAG78066.1"/>
    <property type="molecule type" value="Genomic_DNA"/>
</dbReference>
<dbReference type="RefSeq" id="XP_505259.1">
    <property type="nucleotide sequence ID" value="XM_505259.1"/>
</dbReference>
<dbReference type="FunCoup" id="Q6C253">
    <property type="interactions" value="503"/>
</dbReference>
<dbReference type="STRING" id="284591.Q6C253"/>
<dbReference type="MEROPS" id="M76.002"/>
<dbReference type="EnsemblFungi" id="CAG78066">
    <property type="protein sequence ID" value="CAG78066"/>
    <property type="gene ID" value="YALI0_F10769g"/>
</dbReference>
<dbReference type="KEGG" id="yli:2908892"/>
<dbReference type="VEuPathDB" id="FungiDB:YALI0_F10769g"/>
<dbReference type="HOGENOM" id="CLU_079125_0_0_1"/>
<dbReference type="InParanoid" id="Q6C253"/>
<dbReference type="OMA" id="EAHQNCV"/>
<dbReference type="OrthoDB" id="109561at4891"/>
<dbReference type="Proteomes" id="UP000001300">
    <property type="component" value="Chromosome F"/>
</dbReference>
<dbReference type="GO" id="GO:0005743">
    <property type="term" value="C:mitochondrial inner membrane"/>
    <property type="evidence" value="ECO:0007669"/>
    <property type="project" value="UniProtKB-SubCell"/>
</dbReference>
<dbReference type="GO" id="GO:0046872">
    <property type="term" value="F:metal ion binding"/>
    <property type="evidence" value="ECO:0007669"/>
    <property type="project" value="UniProtKB-KW"/>
</dbReference>
<dbReference type="GO" id="GO:0004222">
    <property type="term" value="F:metalloendopeptidase activity"/>
    <property type="evidence" value="ECO:0007669"/>
    <property type="project" value="InterPro"/>
</dbReference>
<dbReference type="GO" id="GO:0034982">
    <property type="term" value="P:mitochondrial protein processing"/>
    <property type="evidence" value="ECO:0000318"/>
    <property type="project" value="GO_Central"/>
</dbReference>
<dbReference type="GO" id="GO:0033615">
    <property type="term" value="P:mitochondrial proton-transporting ATP synthase complex assembly"/>
    <property type="evidence" value="ECO:0000318"/>
    <property type="project" value="GO_Central"/>
</dbReference>
<dbReference type="InterPro" id="IPR019165">
    <property type="entry name" value="Peptidase_M76_ATP23"/>
</dbReference>
<dbReference type="PANTHER" id="PTHR21711">
    <property type="entry name" value="MITOCHONDRIAL INNER MEMBRANE PROTEASE"/>
    <property type="match status" value="1"/>
</dbReference>
<dbReference type="PANTHER" id="PTHR21711:SF0">
    <property type="entry name" value="MITOCHONDRIAL INNER MEMBRANE PROTEASE ATP23 HOMOLOG"/>
    <property type="match status" value="1"/>
</dbReference>
<dbReference type="Pfam" id="PF09768">
    <property type="entry name" value="Peptidase_M76"/>
    <property type="match status" value="1"/>
</dbReference>
<dbReference type="PROSITE" id="PS00142">
    <property type="entry name" value="ZINC_PROTEASE"/>
    <property type="match status" value="1"/>
</dbReference>
<comment type="function">
    <text evidence="1">Has a dual role in the assembly of mitochondrial ATPase. Acts as a protease that removes N-terminal residues of mitochondrial ATPase CF(0) subunit 6 at the intermembrane space side. Also involved in the correct assembly of the membrane-embedded ATPase CF(0) particle, probably mediating association of subunit 6 with the subunit 9 ring (By similarity).</text>
</comment>
<comment type="subcellular location">
    <subcellularLocation>
        <location>Mitochondrion inner membrane</location>
        <topology>Peripheral membrane protein</topology>
        <orientation>Intermembrane side</orientation>
    </subcellularLocation>
    <text evidence="1">Associates loosely with the inner membrane.</text>
</comment>
<comment type="similarity">
    <text evidence="3">Belongs to the peptidase M76 family.</text>
</comment>
<keyword id="KW-0378">Hydrolase</keyword>
<keyword id="KW-0472">Membrane</keyword>
<keyword id="KW-0479">Metal-binding</keyword>
<keyword id="KW-0482">Metalloprotease</keyword>
<keyword id="KW-0496">Mitochondrion</keyword>
<keyword id="KW-0999">Mitochondrion inner membrane</keyword>
<keyword id="KW-0645">Protease</keyword>
<keyword id="KW-1185">Reference proteome</keyword>
<evidence type="ECO:0000250" key="1"/>
<evidence type="ECO:0000255" key="2">
    <source>
        <dbReference type="PROSITE-ProRule" id="PRU10095"/>
    </source>
</evidence>
<evidence type="ECO:0000305" key="3"/>
<proteinExistence type="inferred from homology"/>
<sequence>MSDKPTETVSVSESVATPAVAATEPAPSLPVVNPSSLPSGFEWWRQTMAYKTGFMSAEESVQYEQDRLIKERYAECLSCEKNKQWVMAYSPTVRFMKDQIEKIGGDISSNNVFCDHCDDFKAGGFHPKYGILVCQNHVKSRSHLEDTLAHEMVHYYDNTKFKVDWMNLKHHACSEIRASTLSGECRMMNELMKGKLARLTRGHQECAKRRAILSVMANPGCKDEAQATQVVNEVWDSCFNDTRPFDTIYR</sequence>
<accession>Q6C253</accession>
<organism>
    <name type="scientific">Yarrowia lipolytica (strain CLIB 122 / E 150)</name>
    <name type="common">Yeast</name>
    <name type="synonym">Candida lipolytica</name>
    <dbReference type="NCBI Taxonomy" id="284591"/>
    <lineage>
        <taxon>Eukaryota</taxon>
        <taxon>Fungi</taxon>
        <taxon>Dikarya</taxon>
        <taxon>Ascomycota</taxon>
        <taxon>Saccharomycotina</taxon>
        <taxon>Dipodascomycetes</taxon>
        <taxon>Dipodascales</taxon>
        <taxon>Dipodascales incertae sedis</taxon>
        <taxon>Yarrowia</taxon>
    </lineage>
</organism>
<reference key="1">
    <citation type="journal article" date="2004" name="Nature">
        <title>Genome evolution in yeasts.</title>
        <authorList>
            <person name="Dujon B."/>
            <person name="Sherman D."/>
            <person name="Fischer G."/>
            <person name="Durrens P."/>
            <person name="Casaregola S."/>
            <person name="Lafontaine I."/>
            <person name="de Montigny J."/>
            <person name="Marck C."/>
            <person name="Neuveglise C."/>
            <person name="Talla E."/>
            <person name="Goffard N."/>
            <person name="Frangeul L."/>
            <person name="Aigle M."/>
            <person name="Anthouard V."/>
            <person name="Babour A."/>
            <person name="Barbe V."/>
            <person name="Barnay S."/>
            <person name="Blanchin S."/>
            <person name="Beckerich J.-M."/>
            <person name="Beyne E."/>
            <person name="Bleykasten C."/>
            <person name="Boisrame A."/>
            <person name="Boyer J."/>
            <person name="Cattolico L."/>
            <person name="Confanioleri F."/>
            <person name="de Daruvar A."/>
            <person name="Despons L."/>
            <person name="Fabre E."/>
            <person name="Fairhead C."/>
            <person name="Ferry-Dumazet H."/>
            <person name="Groppi A."/>
            <person name="Hantraye F."/>
            <person name="Hennequin C."/>
            <person name="Jauniaux N."/>
            <person name="Joyet P."/>
            <person name="Kachouri R."/>
            <person name="Kerrest A."/>
            <person name="Koszul R."/>
            <person name="Lemaire M."/>
            <person name="Lesur I."/>
            <person name="Ma L."/>
            <person name="Muller H."/>
            <person name="Nicaud J.-M."/>
            <person name="Nikolski M."/>
            <person name="Oztas S."/>
            <person name="Ozier-Kalogeropoulos O."/>
            <person name="Pellenz S."/>
            <person name="Potier S."/>
            <person name="Richard G.-F."/>
            <person name="Straub M.-L."/>
            <person name="Suleau A."/>
            <person name="Swennen D."/>
            <person name="Tekaia F."/>
            <person name="Wesolowski-Louvel M."/>
            <person name="Westhof E."/>
            <person name="Wirth B."/>
            <person name="Zeniou-Meyer M."/>
            <person name="Zivanovic Y."/>
            <person name="Bolotin-Fukuhara M."/>
            <person name="Thierry A."/>
            <person name="Bouchier C."/>
            <person name="Caudron B."/>
            <person name="Scarpelli C."/>
            <person name="Gaillardin C."/>
            <person name="Weissenbach J."/>
            <person name="Wincker P."/>
            <person name="Souciet J.-L."/>
        </authorList>
    </citation>
    <scope>NUCLEOTIDE SEQUENCE [LARGE SCALE GENOMIC DNA]</scope>
    <source>
        <strain>CLIB 122 / E 150</strain>
    </source>
</reference>
<gene>
    <name type="primary">ATP23</name>
    <name type="ordered locus">YALI0F10769g</name>
</gene>
<protein>
    <recommendedName>
        <fullName>Mitochondrial inner membrane protease ATP23</fullName>
        <ecNumber>3.4.24.-</ecNumber>
    </recommendedName>
</protein>
<name>ATP23_YARLI</name>